<accession>Q8K1T0</accession>
<accession>Q812A6</accession>
<accession>Q8VDE0</accession>
<dbReference type="EC" id="3.4.21.-"/>
<dbReference type="EMBL" id="AJ429216">
    <property type="protein sequence ID" value="CAD22137.1"/>
    <property type="molecule type" value="Genomic_DNA"/>
</dbReference>
<dbReference type="EMBL" id="AJ300738">
    <property type="protein sequence ID" value="CAC83350.1"/>
    <property type="molecule type" value="mRNA"/>
</dbReference>
<dbReference type="EMBL" id="AY261383">
    <property type="protein sequence ID" value="AAO33581.1"/>
    <property type="molecule type" value="Genomic_DNA"/>
</dbReference>
<dbReference type="CCDS" id="CCDS37547.1">
    <molecule id="Q8K1T0-1"/>
</dbReference>
<dbReference type="CCDS" id="CCDS50053.1">
    <molecule id="Q8K1T0-2"/>
</dbReference>
<dbReference type="RefSeq" id="NP_001157248.1">
    <molecule id="Q8K1T0-2"/>
    <property type="nucleotide sequence ID" value="NM_001163776.1"/>
</dbReference>
<dbReference type="RefSeq" id="NP_542765.2">
    <molecule id="Q8K1T0-1"/>
    <property type="nucleotide sequence ID" value="NM_080727.2"/>
</dbReference>
<dbReference type="SMR" id="Q8K1T0"/>
<dbReference type="FunCoup" id="Q8K1T0">
    <property type="interactions" value="123"/>
</dbReference>
<dbReference type="STRING" id="10090.ENSMUSP00000110196"/>
<dbReference type="MEROPS" id="S01.079"/>
<dbReference type="GlyCosmos" id="Q8K1T0">
    <property type="glycosylation" value="1 site, No reported glycans"/>
</dbReference>
<dbReference type="GlyGen" id="Q8K1T0">
    <property type="glycosylation" value="1 site"/>
</dbReference>
<dbReference type="PhosphoSitePlus" id="Q8K1T0"/>
<dbReference type="PaxDb" id="10090-ENSMUSP00000110196"/>
<dbReference type="Antibodypedia" id="23790">
    <property type="antibodies" value="286 antibodies from 33 providers"/>
</dbReference>
<dbReference type="DNASU" id="140765"/>
<dbReference type="Ensembl" id="ENSMUST00000024833.13">
    <molecule id="Q8K1T0-1"/>
    <property type="protein sequence ID" value="ENSMUSP00000024833.6"/>
    <property type="gene ID" value="ENSMUSG00000024034.14"/>
</dbReference>
<dbReference type="Ensembl" id="ENSMUST00000114549.4">
    <molecule id="Q8K1T0-2"/>
    <property type="protein sequence ID" value="ENSMUSP00000110196.3"/>
    <property type="gene ID" value="ENSMUSG00000024034.14"/>
</dbReference>
<dbReference type="Ensembl" id="ENSMUST00000236793.2">
    <molecule id="Q8K1T0-1"/>
    <property type="protein sequence ID" value="ENSMUSP00000158048.2"/>
    <property type="gene ID" value="ENSMUSG00000024034.14"/>
</dbReference>
<dbReference type="GeneID" id="140765"/>
<dbReference type="KEGG" id="mmu:140765"/>
<dbReference type="UCSC" id="uc008bup.2">
    <molecule id="Q8K1T0-1"/>
    <property type="organism name" value="mouse"/>
</dbReference>
<dbReference type="AGR" id="MGI:2155445"/>
<dbReference type="CTD" id="64699"/>
<dbReference type="MGI" id="MGI:2155445">
    <property type="gene designation" value="Tmprss3"/>
</dbReference>
<dbReference type="VEuPathDB" id="HostDB:ENSMUSG00000024034"/>
<dbReference type="eggNOG" id="KOG3627">
    <property type="taxonomic scope" value="Eukaryota"/>
</dbReference>
<dbReference type="GeneTree" id="ENSGT00940000158589"/>
<dbReference type="HOGENOM" id="CLU_006842_19_2_1"/>
<dbReference type="InParanoid" id="Q8K1T0"/>
<dbReference type="OMA" id="FNEMTQP"/>
<dbReference type="OrthoDB" id="6380398at2759"/>
<dbReference type="TreeFam" id="TF351678"/>
<dbReference type="BioGRID-ORCS" id="140765">
    <property type="hits" value="0 hits in 79 CRISPR screens"/>
</dbReference>
<dbReference type="PRO" id="PR:Q8K1T0"/>
<dbReference type="Proteomes" id="UP000000589">
    <property type="component" value="Chromosome 17"/>
</dbReference>
<dbReference type="RNAct" id="Q8K1T0">
    <property type="molecule type" value="protein"/>
</dbReference>
<dbReference type="Bgee" id="ENSMUSG00000024034">
    <property type="expression patterns" value="Expressed in epithelium of cochlear duct and 40 other cell types or tissues"/>
</dbReference>
<dbReference type="ExpressionAtlas" id="Q8K1T0">
    <property type="expression patterns" value="baseline and differential"/>
</dbReference>
<dbReference type="GO" id="GO:0005783">
    <property type="term" value="C:endoplasmic reticulum"/>
    <property type="evidence" value="ECO:0000314"/>
    <property type="project" value="UniProtKB"/>
</dbReference>
<dbReference type="GO" id="GO:0005789">
    <property type="term" value="C:endoplasmic reticulum membrane"/>
    <property type="evidence" value="ECO:0000266"/>
    <property type="project" value="MGI"/>
</dbReference>
<dbReference type="GO" id="GO:0043025">
    <property type="term" value="C:neuronal cell body"/>
    <property type="evidence" value="ECO:0000314"/>
    <property type="project" value="UniProtKB"/>
</dbReference>
<dbReference type="GO" id="GO:0004252">
    <property type="term" value="F:serine-type endopeptidase activity"/>
    <property type="evidence" value="ECO:0007669"/>
    <property type="project" value="InterPro"/>
</dbReference>
<dbReference type="GO" id="GO:0017080">
    <property type="term" value="F:sodium channel regulator activity"/>
    <property type="evidence" value="ECO:0000266"/>
    <property type="project" value="MGI"/>
</dbReference>
<dbReference type="GO" id="GO:0006883">
    <property type="term" value="P:intracellular sodium ion homeostasis"/>
    <property type="evidence" value="ECO:0000266"/>
    <property type="project" value="MGI"/>
</dbReference>
<dbReference type="GO" id="GO:0006508">
    <property type="term" value="P:proteolysis"/>
    <property type="evidence" value="ECO:0007669"/>
    <property type="project" value="UniProtKB-KW"/>
</dbReference>
<dbReference type="GO" id="GO:0007605">
    <property type="term" value="P:sensory perception of sound"/>
    <property type="evidence" value="ECO:0000315"/>
    <property type="project" value="UniProtKB"/>
</dbReference>
<dbReference type="CDD" id="cd00112">
    <property type="entry name" value="LDLa"/>
    <property type="match status" value="1"/>
</dbReference>
<dbReference type="CDD" id="cd00190">
    <property type="entry name" value="Tryp_SPc"/>
    <property type="match status" value="1"/>
</dbReference>
<dbReference type="FunFam" id="3.10.250.10:FF:000025">
    <property type="entry name" value="Transmembrane protease, serine 3 (Predicted)"/>
    <property type="match status" value="1"/>
</dbReference>
<dbReference type="FunFam" id="2.40.10.10:FF:000003">
    <property type="entry name" value="Transmembrane serine protease 3"/>
    <property type="match status" value="1"/>
</dbReference>
<dbReference type="Gene3D" id="4.10.400.10">
    <property type="entry name" value="Low-density Lipoprotein Receptor"/>
    <property type="match status" value="1"/>
</dbReference>
<dbReference type="Gene3D" id="3.10.250.10">
    <property type="entry name" value="SRCR-like domain"/>
    <property type="match status" value="1"/>
</dbReference>
<dbReference type="Gene3D" id="2.40.10.10">
    <property type="entry name" value="Trypsin-like serine proteases"/>
    <property type="match status" value="1"/>
</dbReference>
<dbReference type="InterPro" id="IPR036055">
    <property type="entry name" value="LDL_receptor-like_sf"/>
</dbReference>
<dbReference type="InterPro" id="IPR023415">
    <property type="entry name" value="LDLR_class-A_CS"/>
</dbReference>
<dbReference type="InterPro" id="IPR002172">
    <property type="entry name" value="LDrepeatLR_classA_rpt"/>
</dbReference>
<dbReference type="InterPro" id="IPR009003">
    <property type="entry name" value="Peptidase_S1_PA"/>
</dbReference>
<dbReference type="InterPro" id="IPR043504">
    <property type="entry name" value="Peptidase_S1_PA_chymotrypsin"/>
</dbReference>
<dbReference type="InterPro" id="IPR001314">
    <property type="entry name" value="Peptidase_S1A"/>
</dbReference>
<dbReference type="InterPro" id="IPR001190">
    <property type="entry name" value="SRCR"/>
</dbReference>
<dbReference type="InterPro" id="IPR036772">
    <property type="entry name" value="SRCR-like_dom_sf"/>
</dbReference>
<dbReference type="InterPro" id="IPR001254">
    <property type="entry name" value="Trypsin_dom"/>
</dbReference>
<dbReference type="InterPro" id="IPR018114">
    <property type="entry name" value="TRYPSIN_HIS"/>
</dbReference>
<dbReference type="InterPro" id="IPR033116">
    <property type="entry name" value="TRYPSIN_SER"/>
</dbReference>
<dbReference type="PANTHER" id="PTHR24252">
    <property type="entry name" value="ACROSIN-RELATED"/>
    <property type="match status" value="1"/>
</dbReference>
<dbReference type="PANTHER" id="PTHR24252:SF27">
    <property type="entry name" value="TRANSMEMBRANE PROTEASE SERINE 3-LIKE"/>
    <property type="match status" value="1"/>
</dbReference>
<dbReference type="Pfam" id="PF15494">
    <property type="entry name" value="SRCR_2"/>
    <property type="match status" value="1"/>
</dbReference>
<dbReference type="Pfam" id="PF00089">
    <property type="entry name" value="Trypsin"/>
    <property type="match status" value="1"/>
</dbReference>
<dbReference type="PRINTS" id="PR00722">
    <property type="entry name" value="CHYMOTRYPSIN"/>
</dbReference>
<dbReference type="SMART" id="SM00192">
    <property type="entry name" value="LDLa"/>
    <property type="match status" value="1"/>
</dbReference>
<dbReference type="SMART" id="SM00202">
    <property type="entry name" value="SR"/>
    <property type="match status" value="1"/>
</dbReference>
<dbReference type="SMART" id="SM00020">
    <property type="entry name" value="Tryp_SPc"/>
    <property type="match status" value="1"/>
</dbReference>
<dbReference type="SUPFAM" id="SSF57424">
    <property type="entry name" value="LDL receptor-like module"/>
    <property type="match status" value="1"/>
</dbReference>
<dbReference type="SUPFAM" id="SSF56487">
    <property type="entry name" value="SRCR-like"/>
    <property type="match status" value="1"/>
</dbReference>
<dbReference type="SUPFAM" id="SSF50494">
    <property type="entry name" value="Trypsin-like serine proteases"/>
    <property type="match status" value="1"/>
</dbReference>
<dbReference type="PROSITE" id="PS01209">
    <property type="entry name" value="LDLRA_1"/>
    <property type="match status" value="1"/>
</dbReference>
<dbReference type="PROSITE" id="PS50068">
    <property type="entry name" value="LDLRA_2"/>
    <property type="match status" value="1"/>
</dbReference>
<dbReference type="PROSITE" id="PS50287">
    <property type="entry name" value="SRCR_2"/>
    <property type="match status" value="1"/>
</dbReference>
<dbReference type="PROSITE" id="PS50240">
    <property type="entry name" value="TRYPSIN_DOM"/>
    <property type="match status" value="1"/>
</dbReference>
<dbReference type="PROSITE" id="PS00134">
    <property type="entry name" value="TRYPSIN_HIS"/>
    <property type="match status" value="1"/>
</dbReference>
<dbReference type="PROSITE" id="PS00135">
    <property type="entry name" value="TRYPSIN_SER"/>
    <property type="match status" value="1"/>
</dbReference>
<proteinExistence type="evidence at protein level"/>
<evidence type="ECO:0000250" key="1"/>
<evidence type="ECO:0000255" key="2"/>
<evidence type="ECO:0000255" key="3">
    <source>
        <dbReference type="PROSITE-ProRule" id="PRU00124"/>
    </source>
</evidence>
<evidence type="ECO:0000255" key="4">
    <source>
        <dbReference type="PROSITE-ProRule" id="PRU00196"/>
    </source>
</evidence>
<evidence type="ECO:0000255" key="5">
    <source>
        <dbReference type="PROSITE-ProRule" id="PRU00274"/>
    </source>
</evidence>
<evidence type="ECO:0000269" key="6">
    <source>
    </source>
</evidence>
<evidence type="ECO:0000269" key="7">
    <source>
    </source>
</evidence>
<evidence type="ECO:0000305" key="8"/>
<name>TMPS3_MOUSE</name>
<feature type="chain" id="PRO_0000088691" description="Transmembrane protease serine 3">
    <location>
        <begin position="1"/>
        <end position="453"/>
    </location>
</feature>
<feature type="topological domain" description="Cytoplasmic" evidence="2">
    <location>
        <begin position="1"/>
        <end position="48"/>
    </location>
</feature>
<feature type="transmembrane region" description="Helical; Signal-anchor for type II membrane protein" evidence="2">
    <location>
        <begin position="49"/>
        <end position="69"/>
    </location>
</feature>
<feature type="topological domain" description="Extracellular" evidence="2">
    <location>
        <begin position="70"/>
        <end position="453"/>
    </location>
</feature>
<feature type="domain" description="LDL-receptor class A" evidence="3">
    <location>
        <begin position="72"/>
        <end position="108"/>
    </location>
</feature>
<feature type="domain" description="SRCR" evidence="4">
    <location>
        <begin position="104"/>
        <end position="205"/>
    </location>
</feature>
<feature type="domain" description="Peptidase S1" evidence="5">
    <location>
        <begin position="217"/>
        <end position="448"/>
    </location>
</feature>
<feature type="active site" description="Charge relay system" evidence="1">
    <location>
        <position position="257"/>
    </location>
</feature>
<feature type="active site" description="Charge relay system" evidence="1">
    <location>
        <position position="304"/>
    </location>
</feature>
<feature type="active site" description="Charge relay system" evidence="8">
    <location>
        <position position="400"/>
    </location>
</feature>
<feature type="site" description="Cleavage" evidence="2">
    <location>
        <begin position="216"/>
        <end position="217"/>
    </location>
</feature>
<feature type="glycosylation site" description="N-linked (GlcNAc...) asparagine" evidence="2">
    <location>
        <position position="221"/>
    </location>
</feature>
<feature type="disulfide bond" evidence="1">
    <location>
        <begin position="73"/>
        <end position="85"/>
    </location>
</feature>
<feature type="disulfide bond" evidence="1">
    <location>
        <begin position="79"/>
        <end position="98"/>
    </location>
</feature>
<feature type="disulfide bond" evidence="1">
    <location>
        <begin position="92"/>
        <end position="107"/>
    </location>
</feature>
<feature type="disulfide bond" evidence="1">
    <location>
        <begin position="129"/>
        <end position="194"/>
    </location>
</feature>
<feature type="disulfide bond" evidence="1">
    <location>
        <begin position="142"/>
        <end position="204"/>
    </location>
</feature>
<feature type="disulfide bond" evidence="1">
    <location>
        <begin position="207"/>
        <end position="324"/>
    </location>
</feature>
<feature type="disulfide bond" evidence="1">
    <location>
        <begin position="242"/>
        <end position="258"/>
    </location>
</feature>
<feature type="disulfide bond" evidence="1">
    <location>
        <begin position="338"/>
        <end position="406"/>
    </location>
</feature>
<feature type="disulfide bond" evidence="1">
    <location>
        <begin position="369"/>
        <end position="385"/>
    </location>
</feature>
<feature type="disulfide bond" evidence="1">
    <location>
        <begin position="396"/>
        <end position="424"/>
    </location>
</feature>
<feature type="splice variant" id="VSP_041581" description="In isoform 2." evidence="8">
    <original>M</original>
    <variation>MAASEMVEVEPEPNIRGPEIVTM</variation>
    <location>
        <position position="1"/>
    </location>
</feature>
<feature type="sequence conflict" description="In Ref. 1; CAC83350." evidence="8" ref="1">
    <original>L</original>
    <variation>H</variation>
    <location>
        <position position="117"/>
    </location>
</feature>
<feature type="sequence conflict" description="In Ref. 1; CAD22137." evidence="8" ref="1">
    <original>I</original>
    <variation>V</variation>
    <location>
        <position position="246"/>
    </location>
</feature>
<protein>
    <recommendedName>
        <fullName>Transmembrane protease serine 3</fullName>
        <ecNumber>3.4.21.-</ecNumber>
    </recommendedName>
</protein>
<gene>
    <name type="primary">Tmprss3</name>
</gene>
<organism>
    <name type="scientific">Mus musculus</name>
    <name type="common">Mouse</name>
    <dbReference type="NCBI Taxonomy" id="10090"/>
    <lineage>
        <taxon>Eukaryota</taxon>
        <taxon>Metazoa</taxon>
        <taxon>Chordata</taxon>
        <taxon>Craniata</taxon>
        <taxon>Vertebrata</taxon>
        <taxon>Euteleostomi</taxon>
        <taxon>Mammalia</taxon>
        <taxon>Eutheria</taxon>
        <taxon>Euarchontoglires</taxon>
        <taxon>Glires</taxon>
        <taxon>Rodentia</taxon>
        <taxon>Myomorpha</taxon>
        <taxon>Muroidea</taxon>
        <taxon>Muridae</taxon>
        <taxon>Murinae</taxon>
        <taxon>Mus</taxon>
        <taxon>Mus</taxon>
    </lineage>
</organism>
<sequence>MGENDPPAAEAPFSFRSLFGLDDLKISPVAPDGDAVAAQILSLLPLKFFPIIVIGIIALILALAIGLGIHFDCSGKYRCHSSFKCIELTARCDGVSDCKNAEDEYRCVRVSGQRAALQVFTAAAWRTMCSDDWKSHYAKIACAQLGFPSYVSSDHLRVDALEEQFQGDFVSINHLLSDDKVTALHHSVYMREGCTSGHVVTLKCSACGTRTGYSPRIVGGNMSSLTQWPWQVSLQFQGYHLCGGSIITPLWIVTAAHCVYDLYHPKSWTVQVGLVSLMDSPVPSHLVEKIIYHSKYKPKRLGNDIALMKLSEPLTFDETIQPICLPNSEENFPDGKLCWTSGWGATEDGGDASPVLNHAAVPLISNKICNHRDVYGGIISPSMLCAGYLKGGVDSCQGDSGGPLVCQERRLWKLVGATSFGIGCAEVNKPGVYTRITSFLDWIHEQLERDLKT</sequence>
<comment type="function">
    <text evidence="6 7">Probable serine protease that plays a role in hearing. Acts as a permissive factor for cochlear hair cell survival and activation at the onset of hearing and is required for saccular hair cell survival. Activates ENaC (in vitro).</text>
</comment>
<comment type="subcellular location">
    <subcellularLocation>
        <location evidence="6 7">Endoplasmic reticulum membrane</location>
        <topology evidence="6 7">Single-pass type II membrane protein</topology>
    </subcellularLocation>
</comment>
<comment type="alternative products">
    <event type="alternative splicing"/>
    <isoform>
        <id>Q8K1T0-1</id>
        <name>1</name>
        <sequence type="displayed"/>
    </isoform>
    <isoform>
        <id>Q8K1T0-2</id>
        <name>2</name>
        <name>F</name>
        <sequence type="described" ref="VSP_041581"/>
    </isoform>
</comment>
<comment type="tissue specificity">
    <text evidence="7">Strongly expressed in liver, cochlea, brain, cerebellum, spleen, lung, and muscle and at a lower degree in retina, kidney, and heart. Expressed in the spiral ganglion, the cells supporting the organ of Corti and the stria vascularis. Isoform 2 is strongly expressed only in the cochlea with very faint expression in the cerebellum, spleen and muscle.</text>
</comment>
<comment type="PTM">
    <text>Undergoes autoproteolytic activation.</text>
</comment>
<comment type="similarity">
    <text evidence="5">Belongs to the peptidase S1 family.</text>
</comment>
<reference key="1">
    <citation type="journal article" date="2002" name="Hum. Mol. Genet.">
        <title>The transmembrane serine protease (TMPRSS3) mutated in deafness DFNB8/10 activates the epithelial sodium channel (ENaC) in vitro.</title>
        <authorList>
            <person name="Guipponi M."/>
            <person name="Vuagniaux G."/>
            <person name="Wattenhofer M."/>
            <person name="Shibuya K."/>
            <person name="Vazquez M."/>
            <person name="Dougherty L."/>
            <person name="Scamuffa N."/>
            <person name="Guida E."/>
            <person name="Okui M."/>
            <person name="Rossier C."/>
            <person name="Hancock M."/>
            <person name="Buchet K."/>
            <person name="Reymond A."/>
            <person name="Hummler E."/>
            <person name="Marzella P.L."/>
            <person name="Kudoh J."/>
            <person name="Shimizu N."/>
            <person name="Scott H.S."/>
            <person name="Antonarakis S.E."/>
            <person name="Rossier B.C."/>
        </authorList>
    </citation>
    <scope>NUCLEOTIDE SEQUENCE [GENOMIC DNA / MRNA]</scope>
    <scope>SUBCELLULAR LOCATION</scope>
    <scope>FUNCTION IN ENAC CLEAVAGE</scope>
</reference>
<reference key="2">
    <citation type="submission" date="2003-03" db="EMBL/GenBank/DDBJ databases">
        <title>Genomic organization of murine transmembrane proteinases.</title>
        <authorList>
            <person name="Rao N.V."/>
            <person name="Rao G.N."/>
            <person name="Hoidal J.R."/>
        </authorList>
    </citation>
    <scope>NUCLEOTIDE SEQUENCE [GENOMIC DNA]</scope>
</reference>
<reference key="3">
    <citation type="journal article" date="2011" name="J. Biol. Chem.">
        <title>Tmprss3, a transmembrane serine protease deficient in human DFNB8/10 deafness, is critical for cochlear hair cell survival at the onset of hearing.</title>
        <authorList>
            <person name="Fasquelle L."/>
            <person name="Scott H.S."/>
            <person name="Lenoir M."/>
            <person name="Wang J."/>
            <person name="Rebillard G."/>
            <person name="Gaboyard S."/>
            <person name="Venteo S."/>
            <person name="Francois F."/>
            <person name="Mausset-Bonnefont A.L."/>
            <person name="Antonarakis S.E."/>
            <person name="Neidhart E."/>
            <person name="Chabbert C."/>
            <person name="Puel J.L."/>
            <person name="Guipponi M."/>
            <person name="Delprat B."/>
        </authorList>
    </citation>
    <scope>FUNCTION</scope>
    <scope>SUBCELLULAR LOCATION</scope>
    <scope>TISSUE SPECIFICITY</scope>
    <scope>ALTERNATIVE SPLICING (ISOFORM 2)</scope>
</reference>
<keyword id="KW-0025">Alternative splicing</keyword>
<keyword id="KW-1015">Disulfide bond</keyword>
<keyword id="KW-0256">Endoplasmic reticulum</keyword>
<keyword id="KW-0325">Glycoprotein</keyword>
<keyword id="KW-0378">Hydrolase</keyword>
<keyword id="KW-0472">Membrane</keyword>
<keyword id="KW-0645">Protease</keyword>
<keyword id="KW-1185">Reference proteome</keyword>
<keyword id="KW-0720">Serine protease</keyword>
<keyword id="KW-0735">Signal-anchor</keyword>
<keyword id="KW-0812">Transmembrane</keyword>
<keyword id="KW-1133">Transmembrane helix</keyword>
<keyword id="KW-0865">Zymogen</keyword>